<sequence>MKKKVLFIDRDGTLVIEPPVDYQLDSLEKLEFYPKVFRNLGFIRSKLDFEFVMVTNQDGLGTSSFPEETFWPAHNLMLKTLAGEGITFDDILIDRSMPEDCASTRKPRTGMLTKYISNPEYDLEGSFVIGDRPTDVELAKNIGCRAIYLQESIDLLKEKGLETYCALATTDWDRVAEFLFAGERRAEIRRTTKETDILVALNLDGKGTCDISTGLGFFDHMLEQIGKHSGMDLTIRVKGDLEVDEHHTIEDTAIALGECIYQALGSKRGIERYGYALPMDDCLCRVCLDFGGRPWLVWDAEFKREKIGEMPTEMFLHFFKSLSDAAKMNLNIKAEGQNEHHKIEGIFKALARALKMALKRDIYHFELPSSKGVL</sequence>
<reference key="1">
    <citation type="journal article" date="2005" name="Science">
        <title>Extensive DNA inversions in the B. fragilis genome control variable gene expression.</title>
        <authorList>
            <person name="Cerdeno-Tarraga A.-M."/>
            <person name="Patrick S."/>
            <person name="Crossman L.C."/>
            <person name="Blakely G."/>
            <person name="Abratt V."/>
            <person name="Lennard N."/>
            <person name="Poxton I."/>
            <person name="Duerden B."/>
            <person name="Harris B."/>
            <person name="Quail M.A."/>
            <person name="Barron A."/>
            <person name="Clark L."/>
            <person name="Corton C."/>
            <person name="Doggett J."/>
            <person name="Holden M.T.G."/>
            <person name="Larke N."/>
            <person name="Line A."/>
            <person name="Lord A."/>
            <person name="Norbertczak H."/>
            <person name="Ormond D."/>
            <person name="Price C."/>
            <person name="Rabbinowitsch E."/>
            <person name="Woodward J."/>
            <person name="Barrell B.G."/>
            <person name="Parkhill J."/>
        </authorList>
    </citation>
    <scope>NUCLEOTIDE SEQUENCE [LARGE SCALE GENOMIC DNA]</scope>
    <source>
        <strain>ATCC 25285 / DSM 2151 / CCUG 4856 / JCM 11019 / LMG 10263 / NCTC 9343 / Onslow / VPI 2553 / EN-2</strain>
    </source>
</reference>
<organism>
    <name type="scientific">Bacteroides fragilis (strain ATCC 25285 / DSM 2151 / CCUG 4856 / JCM 11019 / LMG 10263 / NCTC 9343 / Onslow / VPI 2553 / EN-2)</name>
    <dbReference type="NCBI Taxonomy" id="272559"/>
    <lineage>
        <taxon>Bacteria</taxon>
        <taxon>Pseudomonadati</taxon>
        <taxon>Bacteroidota</taxon>
        <taxon>Bacteroidia</taxon>
        <taxon>Bacteroidales</taxon>
        <taxon>Bacteroidaceae</taxon>
        <taxon>Bacteroides</taxon>
    </lineage>
</organism>
<gene>
    <name evidence="1" type="primary">hisB</name>
    <name type="ordered locus">BF3027</name>
</gene>
<name>HIS7_BACFN</name>
<proteinExistence type="inferred from homology"/>
<accession>Q5LB00</accession>
<feature type="chain" id="PRO_1000063440" description="Histidine biosynthesis bifunctional protein HisB">
    <location>
        <begin position="1"/>
        <end position="374"/>
    </location>
</feature>
<feature type="region of interest" description="Histidinol-phosphatase" evidence="1">
    <location>
        <begin position="1"/>
        <end position="183"/>
    </location>
</feature>
<feature type="region of interest" description="Imidazoleglycerol-phosphate dehydratase" evidence="1">
    <location>
        <begin position="184"/>
        <end position="374"/>
    </location>
</feature>
<feature type="active site" description="Nucleophile" evidence="1">
    <location>
        <position position="9"/>
    </location>
</feature>
<feature type="active site" description="Proton donor" evidence="1">
    <location>
        <position position="11"/>
    </location>
</feature>
<feature type="binding site" evidence="1">
    <location>
        <position position="9"/>
    </location>
    <ligand>
        <name>Mg(2+)</name>
        <dbReference type="ChEBI" id="CHEBI:18420"/>
    </ligand>
</feature>
<feature type="binding site" evidence="1">
    <location>
        <position position="11"/>
    </location>
    <ligand>
        <name>Mg(2+)</name>
        <dbReference type="ChEBI" id="CHEBI:18420"/>
    </ligand>
</feature>
<feature type="binding site" evidence="1">
    <location>
        <position position="131"/>
    </location>
    <ligand>
        <name>Mg(2+)</name>
        <dbReference type="ChEBI" id="CHEBI:18420"/>
    </ligand>
</feature>
<protein>
    <recommendedName>
        <fullName evidence="1">Histidine biosynthesis bifunctional protein HisB</fullName>
    </recommendedName>
    <domain>
        <recommendedName>
            <fullName evidence="1">Histidinol-phosphatase</fullName>
            <ecNumber evidence="1">3.1.3.15</ecNumber>
        </recommendedName>
    </domain>
    <domain>
        <recommendedName>
            <fullName evidence="1">Imidazoleglycerol-phosphate dehydratase</fullName>
            <shortName evidence="1">IGPD</shortName>
            <ecNumber evidence="1">4.2.1.19</ecNumber>
        </recommendedName>
    </domain>
</protein>
<comment type="catalytic activity">
    <reaction evidence="1">
        <text>D-erythro-1-(imidazol-4-yl)glycerol 3-phosphate = 3-(imidazol-4-yl)-2-oxopropyl phosphate + H2O</text>
        <dbReference type="Rhea" id="RHEA:11040"/>
        <dbReference type="ChEBI" id="CHEBI:15377"/>
        <dbReference type="ChEBI" id="CHEBI:57766"/>
        <dbReference type="ChEBI" id="CHEBI:58278"/>
        <dbReference type="EC" id="4.2.1.19"/>
    </reaction>
</comment>
<comment type="catalytic activity">
    <reaction evidence="1">
        <text>L-histidinol phosphate + H2O = L-histidinol + phosphate</text>
        <dbReference type="Rhea" id="RHEA:14465"/>
        <dbReference type="ChEBI" id="CHEBI:15377"/>
        <dbReference type="ChEBI" id="CHEBI:43474"/>
        <dbReference type="ChEBI" id="CHEBI:57699"/>
        <dbReference type="ChEBI" id="CHEBI:57980"/>
        <dbReference type="EC" id="3.1.3.15"/>
    </reaction>
</comment>
<comment type="cofactor">
    <cofactor evidence="1">
        <name>Mg(2+)</name>
        <dbReference type="ChEBI" id="CHEBI:18420"/>
    </cofactor>
</comment>
<comment type="pathway">
    <text evidence="1">Amino-acid biosynthesis; L-histidine biosynthesis; L-histidine from 5-phospho-alpha-D-ribose 1-diphosphate: step 6/9.</text>
</comment>
<comment type="pathway">
    <text evidence="1">Amino-acid biosynthesis; L-histidine biosynthesis; L-histidine from 5-phospho-alpha-D-ribose 1-diphosphate: step 8/9.</text>
</comment>
<comment type="subcellular location">
    <subcellularLocation>
        <location evidence="1">Cytoplasm</location>
    </subcellularLocation>
</comment>
<comment type="similarity">
    <text evidence="1">In the N-terminal section; belongs to the histidinol-phosphatase family.</text>
</comment>
<comment type="similarity">
    <text evidence="1">In the C-terminal section; belongs to the imidazoleglycerol-phosphate dehydratase family.</text>
</comment>
<evidence type="ECO:0000255" key="1">
    <source>
        <dbReference type="HAMAP-Rule" id="MF_01022"/>
    </source>
</evidence>
<keyword id="KW-0028">Amino-acid biosynthesis</keyword>
<keyword id="KW-0963">Cytoplasm</keyword>
<keyword id="KW-0368">Histidine biosynthesis</keyword>
<keyword id="KW-0378">Hydrolase</keyword>
<keyword id="KW-0456">Lyase</keyword>
<keyword id="KW-0460">Magnesium</keyword>
<keyword id="KW-0479">Metal-binding</keyword>
<keyword id="KW-0511">Multifunctional enzyme</keyword>
<dbReference type="EC" id="3.1.3.15" evidence="1"/>
<dbReference type="EC" id="4.2.1.19" evidence="1"/>
<dbReference type="EMBL" id="CR626927">
    <property type="protein sequence ID" value="CAH08722.1"/>
    <property type="molecule type" value="Genomic_DNA"/>
</dbReference>
<dbReference type="RefSeq" id="WP_005789124.1">
    <property type="nucleotide sequence ID" value="NZ_UFTH01000001.1"/>
</dbReference>
<dbReference type="SMR" id="Q5LB00"/>
<dbReference type="PaxDb" id="272559-BF9343_2941"/>
<dbReference type="GeneID" id="60369358"/>
<dbReference type="KEGG" id="bfs:BF9343_2941"/>
<dbReference type="eggNOG" id="COG0131">
    <property type="taxonomic scope" value="Bacteria"/>
</dbReference>
<dbReference type="eggNOG" id="COG0241">
    <property type="taxonomic scope" value="Bacteria"/>
</dbReference>
<dbReference type="HOGENOM" id="CLU_044308_0_0_10"/>
<dbReference type="UniPathway" id="UPA00031">
    <property type="reaction ID" value="UER00011"/>
</dbReference>
<dbReference type="UniPathway" id="UPA00031">
    <property type="reaction ID" value="UER00013"/>
</dbReference>
<dbReference type="Proteomes" id="UP000006731">
    <property type="component" value="Chromosome"/>
</dbReference>
<dbReference type="GO" id="GO:0005737">
    <property type="term" value="C:cytoplasm"/>
    <property type="evidence" value="ECO:0007669"/>
    <property type="project" value="UniProtKB-SubCell"/>
</dbReference>
<dbReference type="GO" id="GO:0004401">
    <property type="term" value="F:histidinol-phosphatase activity"/>
    <property type="evidence" value="ECO:0007669"/>
    <property type="project" value="UniProtKB-UniRule"/>
</dbReference>
<dbReference type="GO" id="GO:0004424">
    <property type="term" value="F:imidazoleglycerol-phosphate dehydratase activity"/>
    <property type="evidence" value="ECO:0007669"/>
    <property type="project" value="UniProtKB-UniRule"/>
</dbReference>
<dbReference type="GO" id="GO:0046872">
    <property type="term" value="F:metal ion binding"/>
    <property type="evidence" value="ECO:0007669"/>
    <property type="project" value="UniProtKB-KW"/>
</dbReference>
<dbReference type="GO" id="GO:0000105">
    <property type="term" value="P:L-histidine biosynthetic process"/>
    <property type="evidence" value="ECO:0007669"/>
    <property type="project" value="UniProtKB-UniRule"/>
</dbReference>
<dbReference type="CDD" id="cd07914">
    <property type="entry name" value="IGPD"/>
    <property type="match status" value="1"/>
</dbReference>
<dbReference type="FunFam" id="3.30.230.40:FF:000001">
    <property type="entry name" value="Imidazoleglycerol-phosphate dehydratase HisB"/>
    <property type="match status" value="1"/>
</dbReference>
<dbReference type="FunFam" id="3.30.230.40:FF:000003">
    <property type="entry name" value="Imidazoleglycerol-phosphate dehydratase HisB"/>
    <property type="match status" value="1"/>
</dbReference>
<dbReference type="Gene3D" id="3.40.50.1000">
    <property type="entry name" value="HAD superfamily/HAD-like"/>
    <property type="match status" value="1"/>
</dbReference>
<dbReference type="Gene3D" id="3.30.230.40">
    <property type="entry name" value="Imidazole glycerol phosphate dehydratase, domain 1"/>
    <property type="match status" value="2"/>
</dbReference>
<dbReference type="HAMAP" id="MF_01022">
    <property type="entry name" value="Bifunc_HisB"/>
    <property type="match status" value="1"/>
</dbReference>
<dbReference type="HAMAP" id="MF_00076">
    <property type="entry name" value="HisB"/>
    <property type="match status" value="1"/>
</dbReference>
<dbReference type="InterPro" id="IPR036412">
    <property type="entry name" value="HAD-like_sf"/>
</dbReference>
<dbReference type="InterPro" id="IPR006549">
    <property type="entry name" value="HAD-SF_hydro_IIIA"/>
</dbReference>
<dbReference type="InterPro" id="IPR023214">
    <property type="entry name" value="HAD_sf"/>
</dbReference>
<dbReference type="InterPro" id="IPR020566">
    <property type="entry name" value="His_synth_bifunc_HisB"/>
</dbReference>
<dbReference type="InterPro" id="IPR005954">
    <property type="entry name" value="HisB_N"/>
</dbReference>
<dbReference type="InterPro" id="IPR006543">
    <property type="entry name" value="Histidinol-phos"/>
</dbReference>
<dbReference type="InterPro" id="IPR038494">
    <property type="entry name" value="IGPD_sf"/>
</dbReference>
<dbReference type="InterPro" id="IPR000807">
    <property type="entry name" value="ImidazoleglycerolP_deHydtase"/>
</dbReference>
<dbReference type="InterPro" id="IPR020565">
    <property type="entry name" value="ImidazoleglycerP_deHydtase_CS"/>
</dbReference>
<dbReference type="InterPro" id="IPR020568">
    <property type="entry name" value="Ribosomal_Su5_D2-typ_SF"/>
</dbReference>
<dbReference type="NCBIfam" id="TIGR01662">
    <property type="entry name" value="HAD-SF-IIIA"/>
    <property type="match status" value="1"/>
</dbReference>
<dbReference type="NCBIfam" id="TIGR01261">
    <property type="entry name" value="hisB_Nterm"/>
    <property type="match status" value="1"/>
</dbReference>
<dbReference type="NCBIfam" id="TIGR01656">
    <property type="entry name" value="Histidinol-ppas"/>
    <property type="match status" value="1"/>
</dbReference>
<dbReference type="NCBIfam" id="NF002111">
    <property type="entry name" value="PRK00951.2-1"/>
    <property type="match status" value="1"/>
</dbReference>
<dbReference type="NCBIfam" id="NF002114">
    <property type="entry name" value="PRK00951.2-4"/>
    <property type="match status" value="1"/>
</dbReference>
<dbReference type="NCBIfam" id="NF003937">
    <property type="entry name" value="PRK05446.1"/>
    <property type="match status" value="1"/>
</dbReference>
<dbReference type="PANTHER" id="PTHR23133:SF2">
    <property type="entry name" value="IMIDAZOLEGLYCEROL-PHOSPHATE DEHYDRATASE"/>
    <property type="match status" value="1"/>
</dbReference>
<dbReference type="PANTHER" id="PTHR23133">
    <property type="entry name" value="IMIDAZOLEGLYCEROL-PHOSPHATE DEHYDRATASE HIS7"/>
    <property type="match status" value="1"/>
</dbReference>
<dbReference type="Pfam" id="PF13242">
    <property type="entry name" value="Hydrolase_like"/>
    <property type="match status" value="1"/>
</dbReference>
<dbReference type="Pfam" id="PF00475">
    <property type="entry name" value="IGPD"/>
    <property type="match status" value="1"/>
</dbReference>
<dbReference type="SUPFAM" id="SSF56784">
    <property type="entry name" value="HAD-like"/>
    <property type="match status" value="1"/>
</dbReference>
<dbReference type="SUPFAM" id="SSF54211">
    <property type="entry name" value="Ribosomal protein S5 domain 2-like"/>
    <property type="match status" value="2"/>
</dbReference>
<dbReference type="PROSITE" id="PS00954">
    <property type="entry name" value="IGP_DEHYDRATASE_1"/>
    <property type="match status" value="1"/>
</dbReference>
<dbReference type="PROSITE" id="PS00955">
    <property type="entry name" value="IGP_DEHYDRATASE_2"/>
    <property type="match status" value="1"/>
</dbReference>